<accession>A3CK69</accession>
<sequence length="217" mass="24134">MGQKVHPIGMRVGIIRDWDAKWYAEKEYADYLHEDLAIRKFVQKELADAAISTIEIERAVNKVNVSLHTAKPGMVIGKGGANVDALRAKLNKLTGKQVHINIIEIKRPDLDAHLVGEGIARQLEQRVAFRRAQKQAIQRTMRAGAKGIKTQVSGRLNGADIARSEGYSEGTVPLHTLRADIDYAWEEADTTYGKLGVKVWIYRGEVLPARKNTKGGK</sequence>
<proteinExistence type="inferred from homology"/>
<gene>
    <name evidence="1" type="primary">rpsC</name>
    <name type="ordered locus">SSA_0113</name>
</gene>
<protein>
    <recommendedName>
        <fullName evidence="1">Small ribosomal subunit protein uS3</fullName>
    </recommendedName>
    <alternativeName>
        <fullName evidence="2">30S ribosomal protein S3</fullName>
    </alternativeName>
</protein>
<organism>
    <name type="scientific">Streptococcus sanguinis (strain SK36)</name>
    <dbReference type="NCBI Taxonomy" id="388919"/>
    <lineage>
        <taxon>Bacteria</taxon>
        <taxon>Bacillati</taxon>
        <taxon>Bacillota</taxon>
        <taxon>Bacilli</taxon>
        <taxon>Lactobacillales</taxon>
        <taxon>Streptococcaceae</taxon>
        <taxon>Streptococcus</taxon>
    </lineage>
</organism>
<evidence type="ECO:0000255" key="1">
    <source>
        <dbReference type="HAMAP-Rule" id="MF_01309"/>
    </source>
</evidence>
<evidence type="ECO:0000305" key="2"/>
<name>RS3_STRSV</name>
<feature type="chain" id="PRO_0000293899" description="Small ribosomal subunit protein uS3">
    <location>
        <begin position="1"/>
        <end position="217"/>
    </location>
</feature>
<feature type="domain" description="KH type-2" evidence="1">
    <location>
        <begin position="38"/>
        <end position="106"/>
    </location>
</feature>
<keyword id="KW-1185">Reference proteome</keyword>
<keyword id="KW-0687">Ribonucleoprotein</keyword>
<keyword id="KW-0689">Ribosomal protein</keyword>
<keyword id="KW-0694">RNA-binding</keyword>
<keyword id="KW-0699">rRNA-binding</keyword>
<dbReference type="EMBL" id="CP000387">
    <property type="protein sequence ID" value="ABN43574.1"/>
    <property type="molecule type" value="Genomic_DNA"/>
</dbReference>
<dbReference type="RefSeq" id="WP_002894486.1">
    <property type="nucleotide sequence ID" value="NZ_CAXTYR010000005.1"/>
</dbReference>
<dbReference type="RefSeq" id="YP_001034124.1">
    <property type="nucleotide sequence ID" value="NC_009009.1"/>
</dbReference>
<dbReference type="SMR" id="A3CK69"/>
<dbReference type="STRING" id="388919.SSA_0113"/>
<dbReference type="GeneID" id="48426579"/>
<dbReference type="KEGG" id="ssa:SSA_0113"/>
<dbReference type="PATRIC" id="fig|388919.9.peg.106"/>
<dbReference type="eggNOG" id="COG0092">
    <property type="taxonomic scope" value="Bacteria"/>
</dbReference>
<dbReference type="HOGENOM" id="CLU_058591_0_2_9"/>
<dbReference type="OrthoDB" id="9806396at2"/>
<dbReference type="Proteomes" id="UP000002148">
    <property type="component" value="Chromosome"/>
</dbReference>
<dbReference type="GO" id="GO:0022627">
    <property type="term" value="C:cytosolic small ribosomal subunit"/>
    <property type="evidence" value="ECO:0007669"/>
    <property type="project" value="TreeGrafter"/>
</dbReference>
<dbReference type="GO" id="GO:0003729">
    <property type="term" value="F:mRNA binding"/>
    <property type="evidence" value="ECO:0007669"/>
    <property type="project" value="UniProtKB-UniRule"/>
</dbReference>
<dbReference type="GO" id="GO:0019843">
    <property type="term" value="F:rRNA binding"/>
    <property type="evidence" value="ECO:0007669"/>
    <property type="project" value="UniProtKB-UniRule"/>
</dbReference>
<dbReference type="GO" id="GO:0003735">
    <property type="term" value="F:structural constituent of ribosome"/>
    <property type="evidence" value="ECO:0007669"/>
    <property type="project" value="InterPro"/>
</dbReference>
<dbReference type="GO" id="GO:0006412">
    <property type="term" value="P:translation"/>
    <property type="evidence" value="ECO:0007669"/>
    <property type="project" value="UniProtKB-UniRule"/>
</dbReference>
<dbReference type="CDD" id="cd02412">
    <property type="entry name" value="KH-II_30S_S3"/>
    <property type="match status" value="1"/>
</dbReference>
<dbReference type="FunFam" id="3.30.1140.32:FF:000001">
    <property type="entry name" value="30S ribosomal protein S3"/>
    <property type="match status" value="1"/>
</dbReference>
<dbReference type="FunFam" id="3.30.300.20:FF:000001">
    <property type="entry name" value="30S ribosomal protein S3"/>
    <property type="match status" value="1"/>
</dbReference>
<dbReference type="Gene3D" id="3.30.300.20">
    <property type="match status" value="1"/>
</dbReference>
<dbReference type="Gene3D" id="3.30.1140.32">
    <property type="entry name" value="Ribosomal protein S3, C-terminal domain"/>
    <property type="match status" value="1"/>
</dbReference>
<dbReference type="HAMAP" id="MF_01309_B">
    <property type="entry name" value="Ribosomal_uS3_B"/>
    <property type="match status" value="1"/>
</dbReference>
<dbReference type="InterPro" id="IPR004087">
    <property type="entry name" value="KH_dom"/>
</dbReference>
<dbReference type="InterPro" id="IPR015946">
    <property type="entry name" value="KH_dom-like_a/b"/>
</dbReference>
<dbReference type="InterPro" id="IPR004044">
    <property type="entry name" value="KH_dom_type_2"/>
</dbReference>
<dbReference type="InterPro" id="IPR009019">
    <property type="entry name" value="KH_sf_prok-type"/>
</dbReference>
<dbReference type="InterPro" id="IPR036419">
    <property type="entry name" value="Ribosomal_S3_C_sf"/>
</dbReference>
<dbReference type="InterPro" id="IPR005704">
    <property type="entry name" value="Ribosomal_uS3_bac-typ"/>
</dbReference>
<dbReference type="InterPro" id="IPR001351">
    <property type="entry name" value="Ribosomal_uS3_C"/>
</dbReference>
<dbReference type="InterPro" id="IPR018280">
    <property type="entry name" value="Ribosomal_uS3_CS"/>
</dbReference>
<dbReference type="NCBIfam" id="TIGR01009">
    <property type="entry name" value="rpsC_bact"/>
    <property type="match status" value="1"/>
</dbReference>
<dbReference type="PANTHER" id="PTHR11760">
    <property type="entry name" value="30S/40S RIBOSOMAL PROTEIN S3"/>
    <property type="match status" value="1"/>
</dbReference>
<dbReference type="PANTHER" id="PTHR11760:SF19">
    <property type="entry name" value="SMALL RIBOSOMAL SUBUNIT PROTEIN US3C"/>
    <property type="match status" value="1"/>
</dbReference>
<dbReference type="Pfam" id="PF07650">
    <property type="entry name" value="KH_2"/>
    <property type="match status" value="1"/>
</dbReference>
<dbReference type="Pfam" id="PF00189">
    <property type="entry name" value="Ribosomal_S3_C"/>
    <property type="match status" value="1"/>
</dbReference>
<dbReference type="SMART" id="SM00322">
    <property type="entry name" value="KH"/>
    <property type="match status" value="1"/>
</dbReference>
<dbReference type="SUPFAM" id="SSF54814">
    <property type="entry name" value="Prokaryotic type KH domain (KH-domain type II)"/>
    <property type="match status" value="1"/>
</dbReference>
<dbReference type="SUPFAM" id="SSF54821">
    <property type="entry name" value="Ribosomal protein S3 C-terminal domain"/>
    <property type="match status" value="1"/>
</dbReference>
<dbReference type="PROSITE" id="PS50823">
    <property type="entry name" value="KH_TYPE_2"/>
    <property type="match status" value="1"/>
</dbReference>
<dbReference type="PROSITE" id="PS00548">
    <property type="entry name" value="RIBOSOMAL_S3"/>
    <property type="match status" value="1"/>
</dbReference>
<comment type="function">
    <text evidence="1">Binds the lower part of the 30S subunit head. Binds mRNA in the 70S ribosome, positioning it for translation.</text>
</comment>
<comment type="subunit">
    <text evidence="1">Part of the 30S ribosomal subunit. Forms a tight complex with proteins S10 and S14.</text>
</comment>
<comment type="similarity">
    <text evidence="1">Belongs to the universal ribosomal protein uS3 family.</text>
</comment>
<reference key="1">
    <citation type="journal article" date="2007" name="J. Bacteriol.">
        <title>Genome of the opportunistic pathogen Streptococcus sanguinis.</title>
        <authorList>
            <person name="Xu P."/>
            <person name="Alves J.M."/>
            <person name="Kitten T."/>
            <person name="Brown A."/>
            <person name="Chen Z."/>
            <person name="Ozaki L.S."/>
            <person name="Manque P."/>
            <person name="Ge X."/>
            <person name="Serrano M.G."/>
            <person name="Puiu D."/>
            <person name="Hendricks S."/>
            <person name="Wang Y."/>
            <person name="Chaplin M.D."/>
            <person name="Akan D."/>
            <person name="Paik S."/>
            <person name="Peterson D.L."/>
            <person name="Macrina F.L."/>
            <person name="Buck G.A."/>
        </authorList>
    </citation>
    <scope>NUCLEOTIDE SEQUENCE [LARGE SCALE GENOMIC DNA]</scope>
    <source>
        <strain>SK36</strain>
    </source>
</reference>